<feature type="chain" id="PRO_0000454265" description="Bacterial microcompartment assembly protein PduM">
    <location>
        <begin position="1"/>
        <end position="163"/>
    </location>
</feature>
<protein>
    <recommendedName>
        <fullName evidence="1">Bacterial microcompartment assembly protein PduM</fullName>
    </recommendedName>
    <alternativeName>
        <fullName>Propanediol utilization protein PduM</fullName>
    </alternativeName>
</protein>
<name>PDUM_CITFR</name>
<proteinExistence type="evidence at protein level"/>
<comment type="function">
    <text evidence="1">Plays an essential role in assembly and/or stability of the bacterial microcompartment (BMC) dedicated to 1,2-propanediol (1,2-PD) degradation.</text>
</comment>
<comment type="function">
    <text evidence="2">Expression of a cosmid containing the full 21-gene pdu operon in E.coli allows E.coli to grow on 1,2-propanediol (1,2-PD) with the appearance of bacterial microcompartments (BMC) in its cytoplasm.</text>
</comment>
<comment type="function">
    <text evidence="6">The 1,2-PD-specific bacterial microcompartment (BMC) concentrates low levels of 1,2-PD catabolic enzymes, concentrates volatile reaction intermediates thus enhancing pathway flux and keeps the level of toxic, mutagenic propionaldehyde low.</text>
</comment>
<comment type="pathway">
    <text evidence="2">Polyol metabolism; 1,2-propanediol degradation.</text>
</comment>
<comment type="subunit">
    <text evidence="3">Interacts with shell protein PduK.</text>
</comment>
<comment type="subcellular location">
    <subcellularLocation>
        <location evidence="1">Bacterial microcompartment</location>
    </subcellularLocation>
</comment>
<comment type="similarity">
    <text evidence="5">Belongs to the PduM family.</text>
</comment>
<evidence type="ECO:0000250" key="1">
    <source>
        <dbReference type="UniProtKB" id="Q9XDN4"/>
    </source>
</evidence>
<evidence type="ECO:0000269" key="2">
    <source>
    </source>
</evidence>
<evidence type="ECO:0000269" key="3">
    <source>
    </source>
</evidence>
<evidence type="ECO:0000303" key="4">
    <source>
    </source>
</evidence>
<evidence type="ECO:0000305" key="5"/>
<evidence type="ECO:0000305" key="6">
    <source>
    </source>
</evidence>
<sequence>MNNELLQRIIEEVVSRLKKRAESTLSLSVAQLREIEPRTLCCQYSSLHLLQADLPLLEQIAEGCADNMSVVTIHEALACGVRVKISLQHRLLPAIPVRKLARLPLEFSDELGRIIVLHPDKLLSYADVAQLKGGVLVLRRRCVVTALAQDAVGTRNVQLIKQE</sequence>
<dbReference type="EMBL" id="AM498294">
    <property type="protein sequence ID" value="CAM57293.1"/>
    <property type="molecule type" value="Genomic_DNA"/>
</dbReference>
<dbReference type="UniPathway" id="UPA00621"/>
<dbReference type="GO" id="GO:0031469">
    <property type="term" value="C:bacterial microcompartment"/>
    <property type="evidence" value="ECO:0007669"/>
    <property type="project" value="UniProtKB-SubCell"/>
</dbReference>
<dbReference type="GO" id="GO:0005198">
    <property type="term" value="F:structural molecule activity"/>
    <property type="evidence" value="ECO:0007669"/>
    <property type="project" value="InterPro"/>
</dbReference>
<dbReference type="GO" id="GO:0051144">
    <property type="term" value="P:propanediol catabolic process"/>
    <property type="evidence" value="ECO:0007669"/>
    <property type="project" value="UniProtKB-UniPathway"/>
</dbReference>
<dbReference type="InterPro" id="IPR030992">
    <property type="entry name" value="PduM"/>
</dbReference>
<dbReference type="NCBIfam" id="TIGR04493">
    <property type="entry name" value="microcomp_PduM"/>
    <property type="match status" value="1"/>
</dbReference>
<dbReference type="NCBIfam" id="NF011957">
    <property type="entry name" value="PRK15428.1"/>
    <property type="match status" value="1"/>
</dbReference>
<dbReference type="Pfam" id="PF15953">
    <property type="entry name" value="PDU_like"/>
    <property type="match status" value="1"/>
</dbReference>
<gene>
    <name evidence="4" type="primary">pduM</name>
</gene>
<reference key="1">
    <citation type="journal article" date="2008" name="J. Biol. Chem.">
        <title>Biochemical and Structural Insights into Bacterial Organelle Form and Biogenesis.</title>
        <authorList>
            <person name="Parsons J.B."/>
            <person name="Dinesh S.D."/>
            <person name="Deery E."/>
            <person name="Leech H.K."/>
            <person name="Brindley A.A."/>
            <person name="Heldt D."/>
            <person name="Frank S."/>
            <person name="Smales C.M."/>
            <person name="Lunsdorf H."/>
            <person name="Rambach A."/>
            <person name="Gass M.H."/>
            <person name="Bleloch A."/>
            <person name="McClean K.J."/>
            <person name="Munro A.W."/>
            <person name="Rigby S.E.J."/>
            <person name="Warren M.J."/>
            <person name="Prentice M.B."/>
        </authorList>
    </citation>
    <scope>NUCLEOTIDE SEQUENCE [GENOMIC DNA]</scope>
    <scope>FUNCTION</scope>
    <scope>PATHWAY</scope>
</reference>
<reference key="2">
    <citation type="journal article" date="2010" name="Mol. Cell">
        <title>Synthesis of empty bacterial microcompartments, directed organelle protein incorporation, and evidence of filament-associated organelle movement.</title>
        <authorList>
            <person name="Parsons J.B."/>
            <person name="Frank S."/>
            <person name="Bhella D."/>
            <person name="Liang M."/>
            <person name="Prentice M.B."/>
            <person name="Mulvihill D.P."/>
            <person name="Warren M.J."/>
        </authorList>
    </citation>
    <scope>FUNCTION</scope>
    <scope>INTERACTION WITH PDUK</scope>
</reference>
<keyword id="KW-1283">Bacterial microcompartment</keyword>
<accession>B1VB72</accession>
<organism>
    <name type="scientific">Citrobacter freundii</name>
    <dbReference type="NCBI Taxonomy" id="546"/>
    <lineage>
        <taxon>Bacteria</taxon>
        <taxon>Pseudomonadati</taxon>
        <taxon>Pseudomonadota</taxon>
        <taxon>Gammaproteobacteria</taxon>
        <taxon>Enterobacterales</taxon>
        <taxon>Enterobacteriaceae</taxon>
        <taxon>Citrobacter</taxon>
        <taxon>Citrobacter freundii complex</taxon>
    </lineage>
</organism>